<feature type="signal peptide" evidence="2">
    <location>
        <begin position="1"/>
        <end position="22"/>
    </location>
</feature>
<feature type="chain" id="PRO_0000380656" description="Cysteine-rich venom protein VAR5">
    <location>
        <begin position="23"/>
        <end position="220" status="greater than"/>
    </location>
</feature>
<feature type="domain" description="SCP">
    <location>
        <begin position="41"/>
        <end position="169"/>
    </location>
</feature>
<feature type="domain" description="ShKT" evidence="3">
    <location>
        <begin position="205"/>
        <end position="220"/>
    </location>
</feature>
<feature type="disulfide bond" evidence="3">
    <location>
        <begin position="77"/>
        <end position="156"/>
    </location>
</feature>
<feature type="disulfide bond" evidence="3">
    <location>
        <begin position="95"/>
        <end position="170"/>
    </location>
</feature>
<feature type="disulfide bond" evidence="3">
    <location>
        <begin position="151"/>
        <end position="167"/>
    </location>
</feature>
<feature type="disulfide bond" evidence="3">
    <location>
        <begin position="189"/>
        <end position="196"/>
    </location>
</feature>
<feature type="disulfide bond" evidence="3">
    <location>
        <begin position="192"/>
        <end position="201"/>
    </location>
</feature>
<feature type="non-terminal residue">
    <location>
        <position position="220"/>
    </location>
</feature>
<dbReference type="EMBL" id="DQ139885">
    <property type="protein sequence ID" value="AAZ75591.1"/>
    <property type="molecule type" value="mRNA"/>
</dbReference>
<dbReference type="SMR" id="Q2XXR0"/>
<dbReference type="GO" id="GO:0005576">
    <property type="term" value="C:extracellular region"/>
    <property type="evidence" value="ECO:0007669"/>
    <property type="project" value="UniProtKB-SubCell"/>
</dbReference>
<dbReference type="GO" id="GO:0005246">
    <property type="term" value="F:calcium channel regulator activity"/>
    <property type="evidence" value="ECO:0007669"/>
    <property type="project" value="UniProtKB-KW"/>
</dbReference>
<dbReference type="GO" id="GO:0015459">
    <property type="term" value="F:potassium channel regulator activity"/>
    <property type="evidence" value="ECO:0007669"/>
    <property type="project" value="UniProtKB-KW"/>
</dbReference>
<dbReference type="GO" id="GO:0090729">
    <property type="term" value="F:toxin activity"/>
    <property type="evidence" value="ECO:0007669"/>
    <property type="project" value="UniProtKB-KW"/>
</dbReference>
<dbReference type="CDD" id="cd05383">
    <property type="entry name" value="CAP_CRISP"/>
    <property type="match status" value="1"/>
</dbReference>
<dbReference type="FunFam" id="3.40.33.10:FF:000005">
    <property type="entry name" value="Cysteine-rich secretory protein 2"/>
    <property type="match status" value="1"/>
</dbReference>
<dbReference type="Gene3D" id="3.40.33.10">
    <property type="entry name" value="CAP"/>
    <property type="match status" value="1"/>
</dbReference>
<dbReference type="InterPro" id="IPR018244">
    <property type="entry name" value="Allrgn_V5/Tpx1_CS"/>
</dbReference>
<dbReference type="InterPro" id="IPR014044">
    <property type="entry name" value="CAP_dom"/>
</dbReference>
<dbReference type="InterPro" id="IPR035940">
    <property type="entry name" value="CAP_sf"/>
</dbReference>
<dbReference type="InterPro" id="IPR001283">
    <property type="entry name" value="CRISP-related"/>
</dbReference>
<dbReference type="InterPro" id="IPR013871">
    <property type="entry name" value="Cysteine_rich_secretory"/>
</dbReference>
<dbReference type="InterPro" id="IPR034117">
    <property type="entry name" value="SCP_CRISP"/>
</dbReference>
<dbReference type="InterPro" id="IPR003582">
    <property type="entry name" value="ShKT_dom"/>
</dbReference>
<dbReference type="PANTHER" id="PTHR10334">
    <property type="entry name" value="CYSTEINE-RICH SECRETORY PROTEIN-RELATED"/>
    <property type="match status" value="1"/>
</dbReference>
<dbReference type="Pfam" id="PF00188">
    <property type="entry name" value="CAP"/>
    <property type="match status" value="1"/>
</dbReference>
<dbReference type="Pfam" id="PF08562">
    <property type="entry name" value="Crisp"/>
    <property type="match status" value="1"/>
</dbReference>
<dbReference type="PRINTS" id="PR00837">
    <property type="entry name" value="V5TPXLIKE"/>
</dbReference>
<dbReference type="SMART" id="SM00198">
    <property type="entry name" value="SCP"/>
    <property type="match status" value="1"/>
</dbReference>
<dbReference type="SUPFAM" id="SSF57546">
    <property type="entry name" value="Crisp domain-like"/>
    <property type="match status" value="1"/>
</dbReference>
<dbReference type="SUPFAM" id="SSF55797">
    <property type="entry name" value="PR-1-like"/>
    <property type="match status" value="1"/>
</dbReference>
<dbReference type="PROSITE" id="PS01009">
    <property type="entry name" value="CRISP_1"/>
    <property type="match status" value="1"/>
</dbReference>
<dbReference type="PROSITE" id="PS01010">
    <property type="entry name" value="CRISP_2"/>
    <property type="match status" value="1"/>
</dbReference>
<dbReference type="PROSITE" id="PS51670">
    <property type="entry name" value="SHKT"/>
    <property type="match status" value="1"/>
</dbReference>
<protein>
    <recommendedName>
        <fullName>Cysteine-rich venom protein VAR5</fullName>
        <shortName>CRVP</shortName>
    </recommendedName>
    <alternativeName>
        <fullName>Cysteine-rich secretory protein VAR5</fullName>
        <shortName>CRISP-VAR5</shortName>
    </alternativeName>
</protein>
<name>CRVP5_VARAC</name>
<sequence>MILLKLYLTLAAILCQSRGTTSLDLDDLMTTNPEIQNEIINKHNDLRRTVDPPAKNMLKMSWDNIIAESAKRAALRCNQNEHTPVSGRTIGGVVCGENYFMSSNPRTWSFGIQSWFDERNYFKFGFGPTRAGVMVGHYTQVVWYKSYKMGCAINLCPNEPLKYFLVCQYCPGGNVVGRKYEPYAIGEPCAACPNNCDNGLCTNPCEHSNQYINCPDLTKQ</sequence>
<comment type="function">
    <text evidence="1">Blocks ryanodine receptors, and potassium channels.</text>
</comment>
<comment type="subcellular location">
    <subcellularLocation>
        <location evidence="1">Secreted</location>
    </subcellularLocation>
</comment>
<comment type="tissue specificity">
    <text>Expressed by the venom gland.</text>
</comment>
<comment type="PTM">
    <text evidence="1">Contains 8 disulfide bonds.</text>
</comment>
<comment type="similarity">
    <text evidence="4">Belongs to the CRISP family.</text>
</comment>
<organism>
    <name type="scientific">Varanus acanthurus</name>
    <name type="common">Ridge-tailed monitor</name>
    <dbReference type="NCBI Taxonomy" id="62035"/>
    <lineage>
        <taxon>Eukaryota</taxon>
        <taxon>Metazoa</taxon>
        <taxon>Chordata</taxon>
        <taxon>Craniata</taxon>
        <taxon>Vertebrata</taxon>
        <taxon>Euteleostomi</taxon>
        <taxon>Lepidosauria</taxon>
        <taxon>Squamata</taxon>
        <taxon>Bifurcata</taxon>
        <taxon>Unidentata</taxon>
        <taxon>Episquamata</taxon>
        <taxon>Toxicofera</taxon>
        <taxon>Anguimorpha</taxon>
        <taxon>Paleoanguimorpha</taxon>
        <taxon>Varanoidea</taxon>
        <taxon>Varanidae</taxon>
        <taxon>Varanus</taxon>
    </lineage>
</organism>
<keyword id="KW-0108">Calcium channel impairing toxin</keyword>
<keyword id="KW-1015">Disulfide bond</keyword>
<keyword id="KW-0872">Ion channel impairing toxin</keyword>
<keyword id="KW-0528">Neurotoxin</keyword>
<keyword id="KW-0632">Potassium channel impairing toxin</keyword>
<keyword id="KW-0964">Secreted</keyword>
<keyword id="KW-0732">Signal</keyword>
<keyword id="KW-0800">Toxin</keyword>
<evidence type="ECO:0000250" key="1"/>
<evidence type="ECO:0000255" key="2"/>
<evidence type="ECO:0000255" key="3">
    <source>
        <dbReference type="PROSITE-ProRule" id="PRU01005"/>
    </source>
</evidence>
<evidence type="ECO:0000305" key="4"/>
<accession>Q2XXR0</accession>
<reference key="1">
    <citation type="journal article" date="2006" name="Nature">
        <title>Early evolution of the venom system in lizards and snakes.</title>
        <authorList>
            <person name="Fry B.G."/>
            <person name="Vidal N."/>
            <person name="Norman J.A."/>
            <person name="Vonk F.J."/>
            <person name="Scheib H."/>
            <person name="Ramjan S.F.R."/>
            <person name="Kuruppu S."/>
            <person name="Fung K."/>
            <person name="Blair Hedges S."/>
            <person name="Richardson M.K."/>
            <person name="Hodgson W.C."/>
            <person name="Ignjatovic V."/>
            <person name="Summerhayes R."/>
            <person name="Kochva E."/>
        </authorList>
    </citation>
    <scope>NUCLEOTIDE SEQUENCE [LARGE SCALE MRNA]</scope>
    <source>
        <tissue>Venom gland</tissue>
    </source>
</reference>
<proteinExistence type="evidence at transcript level"/>